<evidence type="ECO:0000255" key="1"/>
<evidence type="ECO:0000303" key="2">
    <source ref="3"/>
</evidence>
<evidence type="ECO:0000305" key="3"/>
<dbReference type="EMBL" id="AC006194">
    <property type="protein sequence ID" value="AAD25685.1"/>
    <property type="status" value="ALT_SEQ"/>
    <property type="molecule type" value="Genomic_DNA"/>
</dbReference>
<dbReference type="EMBL" id="CP002685">
    <property type="protein sequence ID" value="AEC06215.1"/>
    <property type="molecule type" value="Genomic_DNA"/>
</dbReference>
<dbReference type="EMBL" id="CP002685">
    <property type="protein sequence ID" value="ANM61352.1"/>
    <property type="molecule type" value="Genomic_DNA"/>
</dbReference>
<dbReference type="EMBL" id="BT012605">
    <property type="protein sequence ID" value="AAT06424.1"/>
    <property type="molecule type" value="mRNA"/>
</dbReference>
<dbReference type="EMBL" id="BT014839">
    <property type="protein sequence ID" value="AAT41822.1"/>
    <property type="molecule type" value="mRNA"/>
</dbReference>
<dbReference type="PIR" id="D84505">
    <property type="entry name" value="D84505"/>
</dbReference>
<dbReference type="RefSeq" id="NP_001318214.1">
    <molecule id="Q9SL56-1"/>
    <property type="nucleotide sequence ID" value="NM_001335384.1"/>
</dbReference>
<dbReference type="RefSeq" id="NP_178954.2">
    <molecule id="Q9SL56-1"/>
    <property type="nucleotide sequence ID" value="NM_126910.3"/>
</dbReference>
<dbReference type="SMR" id="Q9SL56"/>
<dbReference type="FunCoup" id="Q9SL56">
    <property type="interactions" value="2403"/>
</dbReference>
<dbReference type="STRING" id="3702.Q9SL56"/>
<dbReference type="PaxDb" id="3702-AT2G13100.1"/>
<dbReference type="EnsemblPlants" id="AT2G13100.1">
    <molecule id="Q9SL56-1"/>
    <property type="protein sequence ID" value="AT2G13100.1"/>
    <property type="gene ID" value="AT2G13100"/>
</dbReference>
<dbReference type="EnsemblPlants" id="AT2G13100.4">
    <molecule id="Q9SL56-1"/>
    <property type="protein sequence ID" value="AT2G13100.4"/>
    <property type="gene ID" value="AT2G13100"/>
</dbReference>
<dbReference type="GeneID" id="815792"/>
<dbReference type="Gramene" id="AT2G13100.1">
    <molecule id="Q9SL56-1"/>
    <property type="protein sequence ID" value="AT2G13100.1"/>
    <property type="gene ID" value="AT2G13100"/>
</dbReference>
<dbReference type="Gramene" id="AT2G13100.4">
    <molecule id="Q9SL56-1"/>
    <property type="protein sequence ID" value="AT2G13100.4"/>
    <property type="gene ID" value="AT2G13100"/>
</dbReference>
<dbReference type="KEGG" id="ath:AT2G13100"/>
<dbReference type="Araport" id="AT2G13100"/>
<dbReference type="TAIR" id="AT2G13100">
    <property type="gene designation" value="G3PP5"/>
</dbReference>
<dbReference type="eggNOG" id="KOG2533">
    <property type="taxonomic scope" value="Eukaryota"/>
</dbReference>
<dbReference type="HOGENOM" id="CLU_001265_31_6_1"/>
<dbReference type="InParanoid" id="Q9SL56"/>
<dbReference type="OMA" id="AMPYLID"/>
<dbReference type="PhylomeDB" id="Q9SL56"/>
<dbReference type="PRO" id="PR:Q9SL56"/>
<dbReference type="Proteomes" id="UP000006548">
    <property type="component" value="Chromosome 2"/>
</dbReference>
<dbReference type="ExpressionAtlas" id="Q9SL56">
    <property type="expression patterns" value="baseline and differential"/>
</dbReference>
<dbReference type="GO" id="GO:0016020">
    <property type="term" value="C:membrane"/>
    <property type="evidence" value="ECO:0007669"/>
    <property type="project" value="UniProtKB-SubCell"/>
</dbReference>
<dbReference type="GO" id="GO:0061513">
    <property type="term" value="F:glucose 6-phosphate:phosphate antiporter activity"/>
    <property type="evidence" value="ECO:0007669"/>
    <property type="project" value="InterPro"/>
</dbReference>
<dbReference type="GO" id="GO:0055062">
    <property type="term" value="P:phosphate ion homeostasis"/>
    <property type="evidence" value="ECO:0000270"/>
    <property type="project" value="TAIR"/>
</dbReference>
<dbReference type="CDD" id="cd17344">
    <property type="entry name" value="MFS_SLC37A1_2"/>
    <property type="match status" value="1"/>
</dbReference>
<dbReference type="FunFam" id="1.20.1250.20:FF:000050">
    <property type="entry name" value="glucose-6-phosphate exchanger SLC37A2 isoform X1"/>
    <property type="match status" value="1"/>
</dbReference>
<dbReference type="FunFam" id="1.20.1250.20:FF:000028">
    <property type="entry name" value="Sugar phosphate exchanger 3 isoform 1"/>
    <property type="match status" value="1"/>
</dbReference>
<dbReference type="Gene3D" id="1.20.1250.20">
    <property type="entry name" value="MFS general substrate transporter like domains"/>
    <property type="match status" value="2"/>
</dbReference>
<dbReference type="InterPro" id="IPR011701">
    <property type="entry name" value="MFS"/>
</dbReference>
<dbReference type="InterPro" id="IPR020846">
    <property type="entry name" value="MFS_dom"/>
</dbReference>
<dbReference type="InterPro" id="IPR036259">
    <property type="entry name" value="MFS_trans_sf"/>
</dbReference>
<dbReference type="InterPro" id="IPR044740">
    <property type="entry name" value="SLC37A1_2"/>
</dbReference>
<dbReference type="InterPro" id="IPR000849">
    <property type="entry name" value="Sugar_P_transporter"/>
</dbReference>
<dbReference type="PANTHER" id="PTHR43184">
    <property type="entry name" value="MAJOR FACILITATOR SUPERFAMILY TRANSPORTER 16, ISOFORM B"/>
    <property type="match status" value="1"/>
</dbReference>
<dbReference type="PANTHER" id="PTHR43184:SF12">
    <property type="entry name" value="SUGAR PHOSPHATE EXCHANGER 3"/>
    <property type="match status" value="1"/>
</dbReference>
<dbReference type="Pfam" id="PF07690">
    <property type="entry name" value="MFS_1"/>
    <property type="match status" value="1"/>
</dbReference>
<dbReference type="PIRSF" id="PIRSF002808">
    <property type="entry name" value="Hexose_phosphate_transp"/>
    <property type="match status" value="1"/>
</dbReference>
<dbReference type="SUPFAM" id="SSF103473">
    <property type="entry name" value="MFS general substrate transporter"/>
    <property type="match status" value="1"/>
</dbReference>
<dbReference type="PROSITE" id="PS50850">
    <property type="entry name" value="MFS"/>
    <property type="match status" value="1"/>
</dbReference>
<comment type="subcellular location">
    <subcellularLocation>
        <location evidence="3">Membrane</location>
        <topology evidence="3">Multi-pass membrane protein</topology>
    </subcellularLocation>
</comment>
<comment type="alternative products">
    <event type="alternative splicing"/>
    <isoform>
        <id>Q9SL56-1</id>
        <name>1</name>
        <sequence type="displayed"/>
    </isoform>
    <isoform>
        <id>Q9SL56-2</id>
        <name>2</name>
        <sequence type="described" ref="VSP_040350"/>
    </isoform>
    <isoform>
        <id>Q9SL56-3</id>
        <name>3</name>
        <sequence type="described" ref="VSP_040351"/>
    </isoform>
</comment>
<comment type="similarity">
    <text evidence="3">Belongs to the major facilitator superfamily. Organophosphate:Pi antiporter (OPA) (TC 2.A.1.4) family.</text>
</comment>
<comment type="sequence caution" evidence="3">
    <conflict type="erroneous gene model prediction">
        <sequence resource="EMBL-CDS" id="AAD25685"/>
    </conflict>
</comment>
<name>GLPT5_ARATH</name>
<gene>
    <name type="ordered locus">At2g13100</name>
    <name type="ORF">T17A11.9</name>
</gene>
<reference key="1">
    <citation type="journal article" date="1999" name="Nature">
        <title>Sequence and analysis of chromosome 2 of the plant Arabidopsis thaliana.</title>
        <authorList>
            <person name="Lin X."/>
            <person name="Kaul S."/>
            <person name="Rounsley S.D."/>
            <person name="Shea T.P."/>
            <person name="Benito M.-I."/>
            <person name="Town C.D."/>
            <person name="Fujii C.Y."/>
            <person name="Mason T.M."/>
            <person name="Bowman C.L."/>
            <person name="Barnstead M.E."/>
            <person name="Feldblyum T.V."/>
            <person name="Buell C.R."/>
            <person name="Ketchum K.A."/>
            <person name="Lee J.J."/>
            <person name="Ronning C.M."/>
            <person name="Koo H.L."/>
            <person name="Moffat K.S."/>
            <person name="Cronin L.A."/>
            <person name="Shen M."/>
            <person name="Pai G."/>
            <person name="Van Aken S."/>
            <person name="Umayam L."/>
            <person name="Tallon L.J."/>
            <person name="Gill J.E."/>
            <person name="Adams M.D."/>
            <person name="Carrera A.J."/>
            <person name="Creasy T.H."/>
            <person name="Goodman H.M."/>
            <person name="Somerville C.R."/>
            <person name="Copenhaver G.P."/>
            <person name="Preuss D."/>
            <person name="Nierman W.C."/>
            <person name="White O."/>
            <person name="Eisen J.A."/>
            <person name="Salzberg S.L."/>
            <person name="Fraser C.M."/>
            <person name="Venter J.C."/>
        </authorList>
    </citation>
    <scope>NUCLEOTIDE SEQUENCE [LARGE SCALE GENOMIC DNA]</scope>
    <source>
        <strain>cv. Columbia</strain>
    </source>
</reference>
<reference key="2">
    <citation type="journal article" date="2017" name="Plant J.">
        <title>Araport11: a complete reannotation of the Arabidopsis thaliana reference genome.</title>
        <authorList>
            <person name="Cheng C.Y."/>
            <person name="Krishnakumar V."/>
            <person name="Chan A.P."/>
            <person name="Thibaud-Nissen F."/>
            <person name="Schobel S."/>
            <person name="Town C.D."/>
        </authorList>
    </citation>
    <scope>GENOME REANNOTATION</scope>
    <source>
        <strain>cv. Columbia</strain>
    </source>
</reference>
<reference key="3">
    <citation type="submission" date="2004-06" db="EMBL/GenBank/DDBJ databases">
        <title>Arabidopsis ORF clones.</title>
        <authorList>
            <person name="Cheuk R.F."/>
            <person name="Chen H."/>
            <person name="Kim C.J."/>
            <person name="Shinn P."/>
            <person name="Ecker J.R."/>
        </authorList>
    </citation>
    <scope>NUCLEOTIDE SEQUENCE [LARGE SCALE MRNA] (ISOFORMS 2 AND 3)</scope>
    <source>
        <strain>cv. Columbia</strain>
    </source>
</reference>
<organism>
    <name type="scientific">Arabidopsis thaliana</name>
    <name type="common">Mouse-ear cress</name>
    <dbReference type="NCBI Taxonomy" id="3702"/>
    <lineage>
        <taxon>Eukaryota</taxon>
        <taxon>Viridiplantae</taxon>
        <taxon>Streptophyta</taxon>
        <taxon>Embryophyta</taxon>
        <taxon>Tracheophyta</taxon>
        <taxon>Spermatophyta</taxon>
        <taxon>Magnoliopsida</taxon>
        <taxon>eudicotyledons</taxon>
        <taxon>Gunneridae</taxon>
        <taxon>Pentapetalae</taxon>
        <taxon>rosids</taxon>
        <taxon>malvids</taxon>
        <taxon>Brassicales</taxon>
        <taxon>Brassicaceae</taxon>
        <taxon>Camelineae</taxon>
        <taxon>Arabidopsis</taxon>
    </lineage>
</organism>
<sequence length="493" mass="53056">MQSRIVGLAPAFSLFPNLNTPHKTFTFHQILVLIITFTAYASFHASRKPPSIVKSVLGPPSLNSSSIDNGWAPFNGTQGTKRLGELDLAFLSSYALGMYFAGHLGDRIDLRYFLVFGMMGSGILTLVFGLGYWMNVHTLGFYMSVQIVCGLFQSIGWPCVVSVVGNWCGKEKRGLIMGLWNSHTSVGNILGSVIASSVLDFGWGWSFVLPGVLVLVSGVVVFMFLVVSPNDLGFEELGKEIEIEMSLGENVEESLRKHEAEGAVLLENVDDSSFAIGFLEAWRLPGVAPYAFCLFFSKLVAYTFLYWLPYYLRHTAVAGVNLSHKTAGILSTVFDVGGVLGGISAGFISDKIKARALTSITFLALSIPALIMYRVYGSVSMFINIVLMFISGLLVNGPYALITTAVAADLGTQDSIKGNGRALATVTAIIDGTGSVGAALGPLLAGYISSRGWNSVFFMLIVSIFFAGLFLVRLAKSEINTMRSGELIASSVP</sequence>
<accession>Q9SL56</accession>
<accession>Q6ID34</accession>
<accession>Q6NKT8</accession>
<keyword id="KW-0025">Alternative splicing</keyword>
<keyword id="KW-0472">Membrane</keyword>
<keyword id="KW-1185">Reference proteome</keyword>
<keyword id="KW-0762">Sugar transport</keyword>
<keyword id="KW-0812">Transmembrane</keyword>
<keyword id="KW-1133">Transmembrane helix</keyword>
<keyword id="KW-0813">Transport</keyword>
<proteinExistence type="evidence at transcript level"/>
<protein>
    <recommendedName>
        <fullName>Putative glycerol-3-phosphate transporter 5</fullName>
        <shortName>G-3-P transporter 5</shortName>
    </recommendedName>
    <alternativeName>
        <fullName>Glycerol-3-phosphate permease 5</fullName>
        <shortName>AtG3Pp5</shortName>
        <shortName>G-3-P permease 5</shortName>
    </alternativeName>
</protein>
<feature type="chain" id="PRO_0000403116" description="Putative glycerol-3-phosphate transporter 5">
    <location>
        <begin position="1"/>
        <end position="493"/>
    </location>
</feature>
<feature type="transmembrane region" description="Helical" evidence="1">
    <location>
        <begin position="25"/>
        <end position="44"/>
    </location>
</feature>
<feature type="transmembrane region" description="Helical" evidence="1">
    <location>
        <begin position="83"/>
        <end position="103"/>
    </location>
</feature>
<feature type="transmembrane region" description="Helical" evidence="1">
    <location>
        <begin position="113"/>
        <end position="133"/>
    </location>
</feature>
<feature type="transmembrane region" description="Helical" evidence="1">
    <location>
        <begin position="145"/>
        <end position="165"/>
    </location>
</feature>
<feature type="transmembrane region" description="Helical" evidence="1">
    <location>
        <begin position="185"/>
        <end position="205"/>
    </location>
</feature>
<feature type="transmembrane region" description="Helical" evidence="1">
    <location>
        <begin position="207"/>
        <end position="227"/>
    </location>
</feature>
<feature type="transmembrane region" description="Helical" evidence="1">
    <location>
        <begin position="292"/>
        <end position="312"/>
    </location>
</feature>
<feature type="transmembrane region" description="Helical" evidence="1">
    <location>
        <begin position="328"/>
        <end position="348"/>
    </location>
</feature>
<feature type="transmembrane region" description="Helical" evidence="1">
    <location>
        <begin position="352"/>
        <end position="372"/>
    </location>
</feature>
<feature type="transmembrane region" description="Helical" evidence="1">
    <location>
        <begin position="375"/>
        <end position="395"/>
    </location>
</feature>
<feature type="transmembrane region" description="Helical" evidence="1">
    <location>
        <begin position="428"/>
        <end position="448"/>
    </location>
</feature>
<feature type="transmembrane region" description="Helical" evidence="1">
    <location>
        <begin position="452"/>
        <end position="472"/>
    </location>
</feature>
<feature type="splice variant" id="VSP_040350" description="In isoform 2." evidence="2">
    <location>
        <begin position="83"/>
        <end position="246"/>
    </location>
</feature>
<feature type="splice variant" id="VSP_040351" description="In isoform 3." evidence="2">
    <location>
        <begin position="84"/>
        <end position="270"/>
    </location>
</feature>